<keyword id="KW-0484">Methanogenesis</keyword>
<proteinExistence type="predicted"/>
<accession>P07960</accession>
<reference key="1">
    <citation type="journal article" date="1987" name="Proc. Natl. Acad. Sci. U.S.A.">
        <title>Structure and expression of the genes, mcrBDCGA, which encode the subunits of component C of methyl coenzyme M reductase in Methanococcus vannielii.</title>
        <authorList>
            <person name="Cram D.S."/>
            <person name="Sherf B.A."/>
            <person name="Libby R.T."/>
            <person name="Mattaliano R.J."/>
            <person name="Ramachandran K.L."/>
            <person name="Reeve J.N."/>
        </authorList>
    </citation>
    <scope>NUCLEOTIDE SEQUENCE [GENOMIC DNA]</scope>
</reference>
<organism>
    <name type="scientific">Methanococcus vannielii</name>
    <dbReference type="NCBI Taxonomy" id="2187"/>
    <lineage>
        <taxon>Archaea</taxon>
        <taxon>Methanobacteriati</taxon>
        <taxon>Methanobacteriota</taxon>
        <taxon>Methanomada group</taxon>
        <taxon>Methanococci</taxon>
        <taxon>Methanococcales</taxon>
        <taxon>Methanococcaceae</taxon>
        <taxon>Methanococcus</taxon>
    </lineage>
</organism>
<protein>
    <recommendedName>
        <fullName>Methyl-coenzyme M reductase operon protein C</fullName>
    </recommendedName>
</protein>
<comment type="subunit">
    <text>MCR is composed of three subunits: alpha, beta, and gamma. The function of proteins C and D is not known.</text>
</comment>
<feature type="chain" id="PRO_0000147489" description="Methyl-coenzyme M reductase operon protein C">
    <location>
        <begin position="1"/>
        <end position="198"/>
    </location>
</feature>
<dbReference type="EMBL" id="M16893">
    <property type="protein sequence ID" value="AAA72596.1"/>
    <property type="molecule type" value="Genomic_DNA"/>
</dbReference>
<dbReference type="PIR" id="C27793">
    <property type="entry name" value="C27793"/>
</dbReference>
<dbReference type="GeneID" id="5326169"/>
<dbReference type="OMA" id="PVCEITF"/>
<dbReference type="GO" id="GO:0015948">
    <property type="term" value="P:methanogenesis"/>
    <property type="evidence" value="ECO:0007669"/>
    <property type="project" value="UniProtKB-KW"/>
</dbReference>
<dbReference type="InterPro" id="IPR007687">
    <property type="entry name" value="Me_CoM_Rdtase_prot-C"/>
</dbReference>
<dbReference type="InterPro" id="IPR026327">
    <property type="entry name" value="Me_CoM_Rdtase_prot-C-like"/>
</dbReference>
<dbReference type="NCBIfam" id="TIGR03264">
    <property type="entry name" value="met_CoM_red_C"/>
    <property type="match status" value="1"/>
</dbReference>
<dbReference type="Pfam" id="PF04609">
    <property type="entry name" value="MCR_C"/>
    <property type="match status" value="1"/>
</dbReference>
<dbReference type="PIRSF" id="PIRSF003137">
    <property type="entry name" value="McrC"/>
    <property type="match status" value="1"/>
</dbReference>
<gene>
    <name type="primary">mcrC</name>
</gene>
<sequence>MPVGRKEQIVDCRAVMGLGEGGGLAQRGTFAEGLRNDVVVVAMSPGRRHITKPVCEITYGIREAGIQTSVLVLDAGGGIPSDAPQGSLGSTFGLKPDEARQVNRHKLCVIHFGNVKSHIIYKARLFLKYVTIPTIIVCQSPVDMEDFAKIGIKTLDVMPLEPKTEGTIVEIITGVVRGESSPQKKIDEIIESIKKHLG</sequence>
<name>MCRC_METVA</name>